<protein>
    <recommendedName>
        <fullName evidence="1">NAD(P)H-quinone oxidoreductase subunit 3, chloroplastic</fullName>
        <ecNumber evidence="1">7.1.1.-</ecNumber>
    </recommendedName>
    <alternativeName>
        <fullName evidence="1">NAD(P)H dehydrogenase subunit 3</fullName>
    </alternativeName>
    <alternativeName>
        <fullName evidence="1">NADH-plastoquinone oxidoreductase subunit 3</fullName>
    </alternativeName>
</protein>
<gene>
    <name evidence="1" type="primary">ndhC</name>
</gene>
<evidence type="ECO:0000255" key="1">
    <source>
        <dbReference type="HAMAP-Rule" id="MF_01394"/>
    </source>
</evidence>
<name>NU3C_MANES</name>
<geneLocation type="chloroplast"/>
<comment type="function">
    <text evidence="1">NDH shuttles electrons from NAD(P)H:plastoquinone, via FMN and iron-sulfur (Fe-S) centers, to quinones in the photosynthetic chain and possibly in a chloroplast respiratory chain. The immediate electron acceptor for the enzyme in this species is believed to be plastoquinone. Couples the redox reaction to proton translocation, and thus conserves the redox energy in a proton gradient.</text>
</comment>
<comment type="catalytic activity">
    <reaction evidence="1">
        <text>a plastoquinone + NADH + (n+1) H(+)(in) = a plastoquinol + NAD(+) + n H(+)(out)</text>
        <dbReference type="Rhea" id="RHEA:42608"/>
        <dbReference type="Rhea" id="RHEA-COMP:9561"/>
        <dbReference type="Rhea" id="RHEA-COMP:9562"/>
        <dbReference type="ChEBI" id="CHEBI:15378"/>
        <dbReference type="ChEBI" id="CHEBI:17757"/>
        <dbReference type="ChEBI" id="CHEBI:57540"/>
        <dbReference type="ChEBI" id="CHEBI:57945"/>
        <dbReference type="ChEBI" id="CHEBI:62192"/>
    </reaction>
</comment>
<comment type="catalytic activity">
    <reaction evidence="1">
        <text>a plastoquinone + NADPH + (n+1) H(+)(in) = a plastoquinol + NADP(+) + n H(+)(out)</text>
        <dbReference type="Rhea" id="RHEA:42612"/>
        <dbReference type="Rhea" id="RHEA-COMP:9561"/>
        <dbReference type="Rhea" id="RHEA-COMP:9562"/>
        <dbReference type="ChEBI" id="CHEBI:15378"/>
        <dbReference type="ChEBI" id="CHEBI:17757"/>
        <dbReference type="ChEBI" id="CHEBI:57783"/>
        <dbReference type="ChEBI" id="CHEBI:58349"/>
        <dbReference type="ChEBI" id="CHEBI:62192"/>
    </reaction>
</comment>
<comment type="subunit">
    <text evidence="1">NDH is composed of at least 16 different subunits, 5 of which are encoded in the nucleus.</text>
</comment>
<comment type="subcellular location">
    <subcellularLocation>
        <location evidence="1">Plastid</location>
        <location evidence="1">Chloroplast thylakoid membrane</location>
        <topology evidence="1">Multi-pass membrane protein</topology>
    </subcellularLocation>
</comment>
<comment type="similarity">
    <text evidence="1">Belongs to the complex I subunit 3 family.</text>
</comment>
<feature type="chain" id="PRO_0000362849" description="NAD(P)H-quinone oxidoreductase subunit 3, chloroplastic">
    <location>
        <begin position="1"/>
        <end position="120"/>
    </location>
</feature>
<feature type="transmembrane region" description="Helical" evidence="1">
    <location>
        <begin position="9"/>
        <end position="29"/>
    </location>
</feature>
<feature type="transmembrane region" description="Helical" evidence="1">
    <location>
        <begin position="64"/>
        <end position="84"/>
    </location>
</feature>
<feature type="transmembrane region" description="Helical" evidence="1">
    <location>
        <begin position="88"/>
        <end position="108"/>
    </location>
</feature>
<proteinExistence type="inferred from homology"/>
<accession>B1NWF5</accession>
<reference key="1">
    <citation type="journal article" date="2008" name="Theor. Appl. Genet.">
        <title>The complete nucleotide sequence of the cassava (Manihot esculenta) chloroplast genome and the evolution of atpF in Malpighiales: RNA editing and multiple losses of a group II intron.</title>
        <authorList>
            <person name="Daniell H."/>
            <person name="Wurdack K.J."/>
            <person name="Kanagaraj A."/>
            <person name="Lee S.-B."/>
            <person name="Saski C."/>
            <person name="Jansen R.K."/>
        </authorList>
    </citation>
    <scope>NUCLEOTIDE SEQUENCE [LARGE SCALE GENOMIC DNA]</scope>
    <source>
        <strain>cv. TME3</strain>
    </source>
</reference>
<dbReference type="EC" id="7.1.1.-" evidence="1"/>
<dbReference type="EMBL" id="EU117376">
    <property type="protein sequence ID" value="ABV66159.1"/>
    <property type="molecule type" value="Genomic_DNA"/>
</dbReference>
<dbReference type="RefSeq" id="YP_001718442.1">
    <property type="nucleotide sequence ID" value="NC_010433.1"/>
</dbReference>
<dbReference type="SMR" id="B1NWF5"/>
<dbReference type="GeneID" id="6000062"/>
<dbReference type="KEGG" id="mesc:6000062"/>
<dbReference type="OrthoDB" id="154075at2759"/>
<dbReference type="GO" id="GO:0009535">
    <property type="term" value="C:chloroplast thylakoid membrane"/>
    <property type="evidence" value="ECO:0007669"/>
    <property type="project" value="UniProtKB-SubCell"/>
</dbReference>
<dbReference type="GO" id="GO:0008137">
    <property type="term" value="F:NADH dehydrogenase (ubiquinone) activity"/>
    <property type="evidence" value="ECO:0007669"/>
    <property type="project" value="InterPro"/>
</dbReference>
<dbReference type="GO" id="GO:0048038">
    <property type="term" value="F:quinone binding"/>
    <property type="evidence" value="ECO:0007669"/>
    <property type="project" value="UniProtKB-KW"/>
</dbReference>
<dbReference type="GO" id="GO:0019684">
    <property type="term" value="P:photosynthesis, light reaction"/>
    <property type="evidence" value="ECO:0007669"/>
    <property type="project" value="UniProtKB-UniRule"/>
</dbReference>
<dbReference type="FunFam" id="1.20.58.1610:FF:000001">
    <property type="entry name" value="NAD(P)H-quinone oxidoreductase subunit 3, chloroplastic"/>
    <property type="match status" value="1"/>
</dbReference>
<dbReference type="Gene3D" id="1.20.58.1610">
    <property type="entry name" value="NADH:ubiquinone/plastoquinone oxidoreductase, chain 3"/>
    <property type="match status" value="1"/>
</dbReference>
<dbReference type="HAMAP" id="MF_01394">
    <property type="entry name" value="NDH1_NuoA"/>
    <property type="match status" value="1"/>
</dbReference>
<dbReference type="InterPro" id="IPR023043">
    <property type="entry name" value="NAD(P)H_OxRDtase_bac/plastid"/>
</dbReference>
<dbReference type="InterPro" id="IPR000440">
    <property type="entry name" value="NADH_UbQ/plastoQ_OxRdtase_su3"/>
</dbReference>
<dbReference type="InterPro" id="IPR038430">
    <property type="entry name" value="NDAH_ubi_oxred_su3_sf"/>
</dbReference>
<dbReference type="PANTHER" id="PTHR11058">
    <property type="entry name" value="NADH-UBIQUINONE OXIDOREDUCTASE CHAIN 3"/>
    <property type="match status" value="1"/>
</dbReference>
<dbReference type="PANTHER" id="PTHR11058:SF9">
    <property type="entry name" value="NADH-UBIQUINONE OXIDOREDUCTASE CHAIN 3"/>
    <property type="match status" value="1"/>
</dbReference>
<dbReference type="Pfam" id="PF00507">
    <property type="entry name" value="Oxidored_q4"/>
    <property type="match status" value="1"/>
</dbReference>
<organism>
    <name type="scientific">Manihot esculenta</name>
    <name type="common">Cassava</name>
    <name type="synonym">Jatropha manihot</name>
    <dbReference type="NCBI Taxonomy" id="3983"/>
    <lineage>
        <taxon>Eukaryota</taxon>
        <taxon>Viridiplantae</taxon>
        <taxon>Streptophyta</taxon>
        <taxon>Embryophyta</taxon>
        <taxon>Tracheophyta</taxon>
        <taxon>Spermatophyta</taxon>
        <taxon>Magnoliopsida</taxon>
        <taxon>eudicotyledons</taxon>
        <taxon>Gunneridae</taxon>
        <taxon>Pentapetalae</taxon>
        <taxon>rosids</taxon>
        <taxon>fabids</taxon>
        <taxon>Malpighiales</taxon>
        <taxon>Euphorbiaceae</taxon>
        <taxon>Crotonoideae</taxon>
        <taxon>Manihoteae</taxon>
        <taxon>Manihot</taxon>
    </lineage>
</organism>
<sequence length="120" mass="13780">MFLIYEYDIFWAFLIISSVIPILAFLISGVLSPISKGPEKLSSYESGIEPIGDAWLQFRIRYYMFALVFVVFDVETVFLYPWAMSFDVLGLSVFIEALIFVLILIVGSVYAWRKGALEWS</sequence>
<keyword id="KW-0150">Chloroplast</keyword>
<keyword id="KW-0472">Membrane</keyword>
<keyword id="KW-0520">NAD</keyword>
<keyword id="KW-0521">NADP</keyword>
<keyword id="KW-0934">Plastid</keyword>
<keyword id="KW-0618">Plastoquinone</keyword>
<keyword id="KW-0874">Quinone</keyword>
<keyword id="KW-0793">Thylakoid</keyword>
<keyword id="KW-1278">Translocase</keyword>
<keyword id="KW-0812">Transmembrane</keyword>
<keyword id="KW-1133">Transmembrane helix</keyword>
<keyword id="KW-0813">Transport</keyword>